<comment type="function">
    <text evidence="1">DNA-dependent RNA polymerase catalyzes the transcription of DNA into RNA using the four ribonucleoside triphosphates as substrates.</text>
</comment>
<comment type="catalytic activity">
    <reaction evidence="1">
        <text>RNA(n) + a ribonucleoside 5'-triphosphate = RNA(n+1) + diphosphate</text>
        <dbReference type="Rhea" id="RHEA:21248"/>
        <dbReference type="Rhea" id="RHEA-COMP:14527"/>
        <dbReference type="Rhea" id="RHEA-COMP:17342"/>
        <dbReference type="ChEBI" id="CHEBI:33019"/>
        <dbReference type="ChEBI" id="CHEBI:61557"/>
        <dbReference type="ChEBI" id="CHEBI:140395"/>
        <dbReference type="EC" id="2.7.7.6"/>
    </reaction>
</comment>
<comment type="subunit">
    <text evidence="1">Homodimer. The RNAP catalytic core consists of 2 alpha, 1 beta, 1 beta' and 1 omega subunit. When a sigma factor is associated with the core the holoenzyme is formed, which can initiate transcription.</text>
</comment>
<comment type="domain">
    <text evidence="1">The N-terminal domain is essential for RNAP assembly and basal transcription, whereas the C-terminal domain is involved in interaction with transcriptional regulators and with upstream promoter elements.</text>
</comment>
<comment type="similarity">
    <text evidence="1">Belongs to the RNA polymerase alpha chain family.</text>
</comment>
<dbReference type="EC" id="2.7.7.6" evidence="1"/>
<dbReference type="EMBL" id="CP000613">
    <property type="protein sequence ID" value="ACI98166.1"/>
    <property type="molecule type" value="Genomic_DNA"/>
</dbReference>
<dbReference type="RefSeq" id="WP_012565957.1">
    <property type="nucleotide sequence ID" value="NC_011420.2"/>
</dbReference>
<dbReference type="SMR" id="B6IRT0"/>
<dbReference type="STRING" id="414684.RC1_0735"/>
<dbReference type="KEGG" id="rce:RC1_0735"/>
<dbReference type="eggNOG" id="COG0202">
    <property type="taxonomic scope" value="Bacteria"/>
</dbReference>
<dbReference type="HOGENOM" id="CLU_053084_0_0_5"/>
<dbReference type="OrthoDB" id="9805706at2"/>
<dbReference type="Proteomes" id="UP000001591">
    <property type="component" value="Chromosome"/>
</dbReference>
<dbReference type="GO" id="GO:0005737">
    <property type="term" value="C:cytoplasm"/>
    <property type="evidence" value="ECO:0007669"/>
    <property type="project" value="UniProtKB-ARBA"/>
</dbReference>
<dbReference type="GO" id="GO:0000428">
    <property type="term" value="C:DNA-directed RNA polymerase complex"/>
    <property type="evidence" value="ECO:0007669"/>
    <property type="project" value="UniProtKB-KW"/>
</dbReference>
<dbReference type="GO" id="GO:0003677">
    <property type="term" value="F:DNA binding"/>
    <property type="evidence" value="ECO:0007669"/>
    <property type="project" value="UniProtKB-UniRule"/>
</dbReference>
<dbReference type="GO" id="GO:0003899">
    <property type="term" value="F:DNA-directed RNA polymerase activity"/>
    <property type="evidence" value="ECO:0007669"/>
    <property type="project" value="UniProtKB-UniRule"/>
</dbReference>
<dbReference type="GO" id="GO:0046983">
    <property type="term" value="F:protein dimerization activity"/>
    <property type="evidence" value="ECO:0007669"/>
    <property type="project" value="InterPro"/>
</dbReference>
<dbReference type="GO" id="GO:0006351">
    <property type="term" value="P:DNA-templated transcription"/>
    <property type="evidence" value="ECO:0007669"/>
    <property type="project" value="UniProtKB-UniRule"/>
</dbReference>
<dbReference type="CDD" id="cd06928">
    <property type="entry name" value="RNAP_alpha_NTD"/>
    <property type="match status" value="1"/>
</dbReference>
<dbReference type="FunFam" id="1.10.150.20:FF:000001">
    <property type="entry name" value="DNA-directed RNA polymerase subunit alpha"/>
    <property type="match status" value="1"/>
</dbReference>
<dbReference type="FunFam" id="2.170.120.12:FF:000001">
    <property type="entry name" value="DNA-directed RNA polymerase subunit alpha"/>
    <property type="match status" value="1"/>
</dbReference>
<dbReference type="Gene3D" id="1.10.150.20">
    <property type="entry name" value="5' to 3' exonuclease, C-terminal subdomain"/>
    <property type="match status" value="1"/>
</dbReference>
<dbReference type="Gene3D" id="2.170.120.12">
    <property type="entry name" value="DNA-directed RNA polymerase, insert domain"/>
    <property type="match status" value="1"/>
</dbReference>
<dbReference type="Gene3D" id="3.30.1360.10">
    <property type="entry name" value="RNA polymerase, RBP11-like subunit"/>
    <property type="match status" value="1"/>
</dbReference>
<dbReference type="HAMAP" id="MF_00059">
    <property type="entry name" value="RNApol_bact_RpoA"/>
    <property type="match status" value="1"/>
</dbReference>
<dbReference type="InterPro" id="IPR011262">
    <property type="entry name" value="DNA-dir_RNA_pol_insert"/>
</dbReference>
<dbReference type="InterPro" id="IPR011263">
    <property type="entry name" value="DNA-dir_RNA_pol_RpoA/D/Rpb3"/>
</dbReference>
<dbReference type="InterPro" id="IPR011773">
    <property type="entry name" value="DNA-dir_RpoA"/>
</dbReference>
<dbReference type="InterPro" id="IPR036603">
    <property type="entry name" value="RBP11-like"/>
</dbReference>
<dbReference type="InterPro" id="IPR011260">
    <property type="entry name" value="RNAP_asu_C"/>
</dbReference>
<dbReference type="InterPro" id="IPR036643">
    <property type="entry name" value="RNApol_insert_sf"/>
</dbReference>
<dbReference type="NCBIfam" id="NF003513">
    <property type="entry name" value="PRK05182.1-2"/>
    <property type="match status" value="1"/>
</dbReference>
<dbReference type="NCBIfam" id="NF003519">
    <property type="entry name" value="PRK05182.2-5"/>
    <property type="match status" value="1"/>
</dbReference>
<dbReference type="NCBIfam" id="TIGR02027">
    <property type="entry name" value="rpoA"/>
    <property type="match status" value="1"/>
</dbReference>
<dbReference type="Pfam" id="PF01000">
    <property type="entry name" value="RNA_pol_A_bac"/>
    <property type="match status" value="1"/>
</dbReference>
<dbReference type="Pfam" id="PF03118">
    <property type="entry name" value="RNA_pol_A_CTD"/>
    <property type="match status" value="1"/>
</dbReference>
<dbReference type="Pfam" id="PF01193">
    <property type="entry name" value="RNA_pol_L"/>
    <property type="match status" value="1"/>
</dbReference>
<dbReference type="SMART" id="SM00662">
    <property type="entry name" value="RPOLD"/>
    <property type="match status" value="1"/>
</dbReference>
<dbReference type="SUPFAM" id="SSF47789">
    <property type="entry name" value="C-terminal domain of RNA polymerase alpha subunit"/>
    <property type="match status" value="1"/>
</dbReference>
<dbReference type="SUPFAM" id="SSF56553">
    <property type="entry name" value="Insert subdomain of RNA polymerase alpha subunit"/>
    <property type="match status" value="1"/>
</dbReference>
<dbReference type="SUPFAM" id="SSF55257">
    <property type="entry name" value="RBP11-like subunits of RNA polymerase"/>
    <property type="match status" value="1"/>
</dbReference>
<proteinExistence type="inferred from homology"/>
<evidence type="ECO:0000255" key="1">
    <source>
        <dbReference type="HAMAP-Rule" id="MF_00059"/>
    </source>
</evidence>
<evidence type="ECO:0000256" key="2">
    <source>
        <dbReference type="SAM" id="MobiDB-lite"/>
    </source>
</evidence>
<keyword id="KW-0240">DNA-directed RNA polymerase</keyword>
<keyword id="KW-0548">Nucleotidyltransferase</keyword>
<keyword id="KW-1185">Reference proteome</keyword>
<keyword id="KW-0804">Transcription</keyword>
<keyword id="KW-0808">Transferase</keyword>
<accession>B6IRT0</accession>
<protein>
    <recommendedName>
        <fullName evidence="1">DNA-directed RNA polymerase subunit alpha</fullName>
        <shortName evidence="1">RNAP subunit alpha</shortName>
        <ecNumber evidence="1">2.7.7.6</ecNumber>
    </recommendedName>
    <alternativeName>
        <fullName evidence="1">RNA polymerase subunit alpha</fullName>
    </alternativeName>
    <alternativeName>
        <fullName evidence="1">Transcriptase subunit alpha</fullName>
    </alternativeName>
</protein>
<sequence length="338" mass="37069">MIQKNWQTLEKPSKLDITPGSDPKREATIVAGPLERGFGLTLGNAIRRVLLSSLQGAAVTSIHIDGVLHEFSSIPGVREDVTDIVLNIKAMALKMGAEGPRRMRLRAEGPCEVTAGMIETGADIEVLDPGHVICTLDSGARLNMELTVAMGKGYVPASQNRPEDAPIGLIPVDAIFSPVRKVAYKVENTRVGQTTDYDKLLLNVETNGAVSPEDAVAIAARILQDQLQMFINFEEPQAAVAETKADEIPFNKNLLRKVDELELSVRSANCLKNDNIVYIGDLVQKTEAEMLRTPNFGRKSLNEIKEVLAQMGLHLGMEIPNWPPENIEDLAKRLEEPY</sequence>
<name>RPOA_RHOCS</name>
<reference key="1">
    <citation type="submission" date="2007-03" db="EMBL/GenBank/DDBJ databases">
        <title>Genome sequence of Rhodospirillum centenum.</title>
        <authorList>
            <person name="Touchman J.W."/>
            <person name="Bauer C."/>
            <person name="Blankenship R.E."/>
        </authorList>
    </citation>
    <scope>NUCLEOTIDE SEQUENCE [LARGE SCALE GENOMIC DNA]</scope>
    <source>
        <strain>ATCC 51521 / SW</strain>
    </source>
</reference>
<organism>
    <name type="scientific">Rhodospirillum centenum (strain ATCC 51521 / SW)</name>
    <dbReference type="NCBI Taxonomy" id="414684"/>
    <lineage>
        <taxon>Bacteria</taxon>
        <taxon>Pseudomonadati</taxon>
        <taxon>Pseudomonadota</taxon>
        <taxon>Alphaproteobacteria</taxon>
        <taxon>Rhodospirillales</taxon>
        <taxon>Rhodospirillaceae</taxon>
        <taxon>Rhodospirillum</taxon>
    </lineage>
</organism>
<feature type="chain" id="PRO_1000202357" description="DNA-directed RNA polymerase subunit alpha">
    <location>
        <begin position="1"/>
        <end position="338"/>
    </location>
</feature>
<feature type="region of interest" description="Alpha N-terminal domain (alpha-NTD)" evidence="1">
    <location>
        <begin position="1"/>
        <end position="234"/>
    </location>
</feature>
<feature type="region of interest" description="Disordered" evidence="2">
    <location>
        <begin position="1"/>
        <end position="24"/>
    </location>
</feature>
<feature type="region of interest" description="Alpha C-terminal domain (alpha-CTD)" evidence="1">
    <location>
        <begin position="250"/>
        <end position="338"/>
    </location>
</feature>
<feature type="compositionally biased region" description="Polar residues" evidence="2">
    <location>
        <begin position="1"/>
        <end position="10"/>
    </location>
</feature>
<gene>
    <name evidence="1" type="primary">rpoA</name>
    <name type="ordered locus">RC1_0735</name>
</gene>